<proteinExistence type="inferred from homology"/>
<organism>
    <name type="scientific">Klebsiella pneumoniae (strain 342)</name>
    <dbReference type="NCBI Taxonomy" id="507522"/>
    <lineage>
        <taxon>Bacteria</taxon>
        <taxon>Pseudomonadati</taxon>
        <taxon>Pseudomonadota</taxon>
        <taxon>Gammaproteobacteria</taxon>
        <taxon>Enterobacterales</taxon>
        <taxon>Enterobacteriaceae</taxon>
        <taxon>Klebsiella/Raoultella group</taxon>
        <taxon>Klebsiella</taxon>
        <taxon>Klebsiella pneumoniae complex</taxon>
    </lineage>
</organism>
<evidence type="ECO:0000255" key="1">
    <source>
        <dbReference type="HAMAP-Rule" id="MF_00696"/>
    </source>
</evidence>
<reference key="1">
    <citation type="journal article" date="2008" name="PLoS Genet.">
        <title>Complete genome sequence of the N2-fixing broad host range endophyte Klebsiella pneumoniae 342 and virulence predictions verified in mice.</title>
        <authorList>
            <person name="Fouts D.E."/>
            <person name="Tyler H.L."/>
            <person name="DeBoy R.T."/>
            <person name="Daugherty S."/>
            <person name="Ren Q."/>
            <person name="Badger J.H."/>
            <person name="Durkin A.S."/>
            <person name="Huot H."/>
            <person name="Shrivastava S."/>
            <person name="Kothari S."/>
            <person name="Dodson R.J."/>
            <person name="Mohamoud Y."/>
            <person name="Khouri H."/>
            <person name="Roesch L.F.W."/>
            <person name="Krogfelt K.A."/>
            <person name="Struve C."/>
            <person name="Triplett E.W."/>
            <person name="Methe B.A."/>
        </authorList>
    </citation>
    <scope>NUCLEOTIDE SEQUENCE [LARGE SCALE GENOMIC DNA]</scope>
    <source>
        <strain>342</strain>
    </source>
</reference>
<feature type="chain" id="PRO_1000132322" description="Fatty acid metabolism regulator protein">
    <location>
        <begin position="1"/>
        <end position="239"/>
    </location>
</feature>
<feature type="domain" description="HTH gntR-type" evidence="1">
    <location>
        <begin position="6"/>
        <end position="74"/>
    </location>
</feature>
<feature type="DNA-binding region" description="H-T-H motif" evidence="1">
    <location>
        <begin position="34"/>
        <end position="53"/>
    </location>
</feature>
<dbReference type="EMBL" id="CP000964">
    <property type="protein sequence ID" value="ACI09986.1"/>
    <property type="molecule type" value="Genomic_DNA"/>
</dbReference>
<dbReference type="SMR" id="B5XQ79"/>
<dbReference type="KEGG" id="kpe:KPK_1983"/>
<dbReference type="HOGENOM" id="CLU_017584_9_4_6"/>
<dbReference type="Proteomes" id="UP000001734">
    <property type="component" value="Chromosome"/>
</dbReference>
<dbReference type="GO" id="GO:0005737">
    <property type="term" value="C:cytoplasm"/>
    <property type="evidence" value="ECO:0007669"/>
    <property type="project" value="UniProtKB-SubCell"/>
</dbReference>
<dbReference type="GO" id="GO:0003677">
    <property type="term" value="F:DNA binding"/>
    <property type="evidence" value="ECO:0007669"/>
    <property type="project" value="UniProtKB-KW"/>
</dbReference>
<dbReference type="GO" id="GO:0003700">
    <property type="term" value="F:DNA-binding transcription factor activity"/>
    <property type="evidence" value="ECO:0007669"/>
    <property type="project" value="UniProtKB-UniRule"/>
</dbReference>
<dbReference type="GO" id="GO:0000062">
    <property type="term" value="F:fatty-acyl-CoA binding"/>
    <property type="evidence" value="ECO:0007669"/>
    <property type="project" value="InterPro"/>
</dbReference>
<dbReference type="GO" id="GO:0006631">
    <property type="term" value="P:fatty acid metabolic process"/>
    <property type="evidence" value="ECO:0007669"/>
    <property type="project" value="UniProtKB-KW"/>
</dbReference>
<dbReference type="GO" id="GO:0019217">
    <property type="term" value="P:regulation of fatty acid metabolic process"/>
    <property type="evidence" value="ECO:0007669"/>
    <property type="project" value="UniProtKB-UniRule"/>
</dbReference>
<dbReference type="CDD" id="cd07377">
    <property type="entry name" value="WHTH_GntR"/>
    <property type="match status" value="1"/>
</dbReference>
<dbReference type="FunFam" id="1.10.10.10:FF:000036">
    <property type="entry name" value="Fatty acid metabolism regulator protein"/>
    <property type="match status" value="1"/>
</dbReference>
<dbReference type="FunFam" id="1.20.120.530:FF:000003">
    <property type="entry name" value="Fatty acid metabolism regulator protein"/>
    <property type="match status" value="1"/>
</dbReference>
<dbReference type="Gene3D" id="1.20.120.530">
    <property type="entry name" value="GntR ligand-binding domain-like"/>
    <property type="match status" value="1"/>
</dbReference>
<dbReference type="Gene3D" id="1.10.10.10">
    <property type="entry name" value="Winged helix-like DNA-binding domain superfamily/Winged helix DNA-binding domain"/>
    <property type="match status" value="1"/>
</dbReference>
<dbReference type="HAMAP" id="MF_00696">
    <property type="entry name" value="HTH_FadR"/>
    <property type="match status" value="1"/>
</dbReference>
<dbReference type="InterPro" id="IPR014178">
    <property type="entry name" value="FA-response_TF_FadR"/>
</dbReference>
<dbReference type="InterPro" id="IPR028374">
    <property type="entry name" value="FadR_C"/>
</dbReference>
<dbReference type="InterPro" id="IPR008920">
    <property type="entry name" value="TF_FadR/GntR_C"/>
</dbReference>
<dbReference type="InterPro" id="IPR000524">
    <property type="entry name" value="Tscrpt_reg_HTH_GntR"/>
</dbReference>
<dbReference type="InterPro" id="IPR036388">
    <property type="entry name" value="WH-like_DNA-bd_sf"/>
</dbReference>
<dbReference type="InterPro" id="IPR036390">
    <property type="entry name" value="WH_DNA-bd_sf"/>
</dbReference>
<dbReference type="NCBIfam" id="TIGR02812">
    <property type="entry name" value="fadR_gamma"/>
    <property type="match status" value="1"/>
</dbReference>
<dbReference type="NCBIfam" id="NF003444">
    <property type="entry name" value="PRK04984.1"/>
    <property type="match status" value="1"/>
</dbReference>
<dbReference type="PANTHER" id="PTHR43537:SF52">
    <property type="entry name" value="FATTY ACID METABOLISM REGULATOR PROTEIN"/>
    <property type="match status" value="1"/>
</dbReference>
<dbReference type="PANTHER" id="PTHR43537">
    <property type="entry name" value="TRANSCRIPTIONAL REGULATOR, GNTR FAMILY"/>
    <property type="match status" value="1"/>
</dbReference>
<dbReference type="Pfam" id="PF07840">
    <property type="entry name" value="FadR_C"/>
    <property type="match status" value="1"/>
</dbReference>
<dbReference type="Pfam" id="PF00392">
    <property type="entry name" value="GntR"/>
    <property type="match status" value="1"/>
</dbReference>
<dbReference type="PRINTS" id="PR00035">
    <property type="entry name" value="HTHGNTR"/>
</dbReference>
<dbReference type="SMART" id="SM00345">
    <property type="entry name" value="HTH_GNTR"/>
    <property type="match status" value="1"/>
</dbReference>
<dbReference type="SUPFAM" id="SSF48008">
    <property type="entry name" value="GntR ligand-binding domain-like"/>
    <property type="match status" value="1"/>
</dbReference>
<dbReference type="SUPFAM" id="SSF46785">
    <property type="entry name" value="Winged helix' DNA-binding domain"/>
    <property type="match status" value="1"/>
</dbReference>
<dbReference type="PROSITE" id="PS50949">
    <property type="entry name" value="HTH_GNTR"/>
    <property type="match status" value="1"/>
</dbReference>
<comment type="function">
    <text evidence="1">Multifunctional regulator of fatty acid metabolism.</text>
</comment>
<comment type="subunit">
    <text evidence="1">Homodimer.</text>
</comment>
<comment type="subcellular location">
    <subcellularLocation>
        <location evidence="1">Cytoplasm</location>
    </subcellularLocation>
</comment>
<sequence length="239" mass="27061">MVIKAQSPAGFAEEYIIESIWNNRFPPGSILPAERELSELIGVTRTTLREVLQRLARDGWLTIQHGKPTKVNNFWETSGLNILETLARLDHDSVPQLIDNLLSVRTNISTIFIRTAFRQHPDKALAVLDSAREVEDHADAFADLDYNIFRGLAFASGNPIYGLILNGMKGLYTRIGRHYFSSPEARSLALGFYHQLAKVCEGGLHDQVYELVRRYGHDSGEIWHRMQKSLPGDLAMNMR</sequence>
<protein>
    <recommendedName>
        <fullName evidence="1">Fatty acid metabolism regulator protein</fullName>
    </recommendedName>
</protein>
<name>FADR_KLEP3</name>
<accession>B5XQ79</accession>
<gene>
    <name evidence="1" type="primary">fadR</name>
    <name type="ordered locus">KPK_1983</name>
</gene>
<keyword id="KW-0010">Activator</keyword>
<keyword id="KW-0963">Cytoplasm</keyword>
<keyword id="KW-0238">DNA-binding</keyword>
<keyword id="KW-0276">Fatty acid metabolism</keyword>
<keyword id="KW-0443">Lipid metabolism</keyword>
<keyword id="KW-0678">Repressor</keyword>
<keyword id="KW-0804">Transcription</keyword>
<keyword id="KW-0805">Transcription regulation</keyword>